<reference key="1">
    <citation type="journal article" date="2006" name="J. Bacteriol.">
        <title>Whole-genome sequence of Listeria welshimeri reveals common steps in genome reduction with Listeria innocua as compared to Listeria monocytogenes.</title>
        <authorList>
            <person name="Hain T."/>
            <person name="Steinweg C."/>
            <person name="Kuenne C.T."/>
            <person name="Billion A."/>
            <person name="Ghai R."/>
            <person name="Chatterjee S.S."/>
            <person name="Domann E."/>
            <person name="Kaerst U."/>
            <person name="Goesmann A."/>
            <person name="Bekel T."/>
            <person name="Bartels D."/>
            <person name="Kaiser O."/>
            <person name="Meyer F."/>
            <person name="Puehler A."/>
            <person name="Weisshaar B."/>
            <person name="Wehland J."/>
            <person name="Liang C."/>
            <person name="Dandekar T."/>
            <person name="Lampidis R."/>
            <person name="Kreft J."/>
            <person name="Goebel W."/>
            <person name="Chakraborty T."/>
        </authorList>
    </citation>
    <scope>NUCLEOTIDE SEQUENCE [LARGE SCALE GENOMIC DNA]</scope>
    <source>
        <strain>ATCC 35897 / DSM 20650 / CCUG 15529 / CIP 8149 / NCTC 11857 / SLCC 5334 / V8</strain>
    </source>
</reference>
<gene>
    <name type="ordered locus">lwe0882</name>
</gene>
<sequence>MKQIELQRHMEEVSLQFFQKEFRHRAVFNARLRTTGGRYLLKSHDIEMNPKYLENFGLEYFFGIMKHELCHYHLHLEKKGYQHRDKDFRELLKKVNAPRFCATIPREITMHEYTCENCGKSFLKQRRFNVNRYRCGSCGGKLKQLGSKKIYTENR</sequence>
<organism>
    <name type="scientific">Listeria welshimeri serovar 6b (strain ATCC 35897 / DSM 20650 / CCUG 15529 / CIP 8149 / NCTC 11857 / SLCC 5334 / V8)</name>
    <dbReference type="NCBI Taxonomy" id="386043"/>
    <lineage>
        <taxon>Bacteria</taxon>
        <taxon>Bacillati</taxon>
        <taxon>Bacillota</taxon>
        <taxon>Bacilli</taxon>
        <taxon>Bacillales</taxon>
        <taxon>Listeriaceae</taxon>
        <taxon>Listeria</taxon>
    </lineage>
</organism>
<feature type="chain" id="PRO_1000046513" description="Protein SprT-like">
    <location>
        <begin position="1"/>
        <end position="155"/>
    </location>
</feature>
<feature type="domain" description="SprT-like" evidence="1">
    <location>
        <begin position="7"/>
        <end position="144"/>
    </location>
</feature>
<feature type="active site" evidence="1">
    <location>
        <position position="68"/>
    </location>
</feature>
<feature type="binding site" evidence="1">
    <location>
        <position position="67"/>
    </location>
    <ligand>
        <name>Zn(2+)</name>
        <dbReference type="ChEBI" id="CHEBI:29105"/>
    </ligand>
</feature>
<feature type="binding site" evidence="1">
    <location>
        <position position="71"/>
    </location>
    <ligand>
        <name>Zn(2+)</name>
        <dbReference type="ChEBI" id="CHEBI:29105"/>
    </ligand>
</feature>
<comment type="cofactor">
    <cofactor evidence="1">
        <name>Zn(2+)</name>
        <dbReference type="ChEBI" id="CHEBI:29105"/>
    </cofactor>
    <text evidence="1">Binds 1 zinc ion.</text>
</comment>
<comment type="subcellular location">
    <subcellularLocation>
        <location evidence="1">Cytoplasm</location>
    </subcellularLocation>
</comment>
<comment type="similarity">
    <text evidence="1">Belongs to the SprT family.</text>
</comment>
<dbReference type="EMBL" id="AM263198">
    <property type="protein sequence ID" value="CAK20300.1"/>
    <property type="molecule type" value="Genomic_DNA"/>
</dbReference>
<dbReference type="RefSeq" id="WP_011701713.1">
    <property type="nucleotide sequence ID" value="NC_008555.1"/>
</dbReference>
<dbReference type="STRING" id="386043.lwe0882"/>
<dbReference type="GeneID" id="61188769"/>
<dbReference type="KEGG" id="lwe:lwe0882"/>
<dbReference type="eggNOG" id="COG3091">
    <property type="taxonomic scope" value="Bacteria"/>
</dbReference>
<dbReference type="HOGENOM" id="CLU_123820_0_0_9"/>
<dbReference type="OrthoDB" id="9799909at2"/>
<dbReference type="Proteomes" id="UP000000779">
    <property type="component" value="Chromosome"/>
</dbReference>
<dbReference type="GO" id="GO:0005737">
    <property type="term" value="C:cytoplasm"/>
    <property type="evidence" value="ECO:0007669"/>
    <property type="project" value="UniProtKB-SubCell"/>
</dbReference>
<dbReference type="GO" id="GO:0008270">
    <property type="term" value="F:zinc ion binding"/>
    <property type="evidence" value="ECO:0007669"/>
    <property type="project" value="UniProtKB-UniRule"/>
</dbReference>
<dbReference type="GO" id="GO:0006950">
    <property type="term" value="P:response to stress"/>
    <property type="evidence" value="ECO:0007669"/>
    <property type="project" value="UniProtKB-ARBA"/>
</dbReference>
<dbReference type="HAMAP" id="MF_00745">
    <property type="entry name" value="SprT_like"/>
    <property type="match status" value="1"/>
</dbReference>
<dbReference type="InterPro" id="IPR006640">
    <property type="entry name" value="SprT-like_domain"/>
</dbReference>
<dbReference type="InterPro" id="IPR035240">
    <property type="entry name" value="SprT_Zn_ribbon"/>
</dbReference>
<dbReference type="InterPro" id="IPR023524">
    <property type="entry name" value="Uncharacterised_SprT-like"/>
</dbReference>
<dbReference type="NCBIfam" id="NF003339">
    <property type="entry name" value="PRK04351.1"/>
    <property type="match status" value="1"/>
</dbReference>
<dbReference type="Pfam" id="PF10263">
    <property type="entry name" value="SprT-like"/>
    <property type="match status" value="1"/>
</dbReference>
<dbReference type="Pfam" id="PF17283">
    <property type="entry name" value="Zn_ribbon_SprT"/>
    <property type="match status" value="1"/>
</dbReference>
<dbReference type="SMART" id="SM00731">
    <property type="entry name" value="SprT"/>
    <property type="match status" value="1"/>
</dbReference>
<proteinExistence type="inferred from homology"/>
<evidence type="ECO:0000255" key="1">
    <source>
        <dbReference type="HAMAP-Rule" id="MF_00745"/>
    </source>
</evidence>
<protein>
    <recommendedName>
        <fullName evidence="1">Protein SprT-like</fullName>
    </recommendedName>
</protein>
<name>SPRTL_LISW6</name>
<accession>A0AH18</accession>
<keyword id="KW-0963">Cytoplasm</keyword>
<keyword id="KW-0479">Metal-binding</keyword>
<keyword id="KW-0862">Zinc</keyword>